<dbReference type="EMBL" id="DP000178">
    <property type="protein sequence ID" value="ABI75279.1"/>
    <property type="molecule type" value="Genomic_DNA"/>
</dbReference>
<dbReference type="GO" id="GO:0005901">
    <property type="term" value="C:caveola"/>
    <property type="evidence" value="ECO:0000250"/>
    <property type="project" value="UniProtKB"/>
</dbReference>
<dbReference type="GO" id="GO:0005768">
    <property type="term" value="C:endosome"/>
    <property type="evidence" value="ECO:0000250"/>
    <property type="project" value="UniProtKB"/>
</dbReference>
<dbReference type="GO" id="GO:0005925">
    <property type="term" value="C:focal adhesion"/>
    <property type="evidence" value="ECO:0007669"/>
    <property type="project" value="TreeGrafter"/>
</dbReference>
<dbReference type="GO" id="GO:0000139">
    <property type="term" value="C:Golgi membrane"/>
    <property type="evidence" value="ECO:0007669"/>
    <property type="project" value="UniProtKB-SubCell"/>
</dbReference>
<dbReference type="GO" id="GO:0045121">
    <property type="term" value="C:membrane raft"/>
    <property type="evidence" value="ECO:0000250"/>
    <property type="project" value="UniProtKB"/>
</dbReference>
<dbReference type="GO" id="GO:0048471">
    <property type="term" value="C:perinuclear region of cytoplasm"/>
    <property type="evidence" value="ECO:0007669"/>
    <property type="project" value="TreeGrafter"/>
</dbReference>
<dbReference type="GO" id="GO:0042383">
    <property type="term" value="C:sarcolemma"/>
    <property type="evidence" value="ECO:0007669"/>
    <property type="project" value="TreeGrafter"/>
</dbReference>
<dbReference type="GO" id="GO:0060090">
    <property type="term" value="F:molecular adaptor activity"/>
    <property type="evidence" value="ECO:0007669"/>
    <property type="project" value="TreeGrafter"/>
</dbReference>
<dbReference type="GO" id="GO:0008142">
    <property type="term" value="F:oxysterol binding"/>
    <property type="evidence" value="ECO:0000250"/>
    <property type="project" value="UniProtKB"/>
</dbReference>
<dbReference type="GO" id="GO:0019901">
    <property type="term" value="F:protein kinase binding"/>
    <property type="evidence" value="ECO:0007669"/>
    <property type="project" value="TreeGrafter"/>
</dbReference>
<dbReference type="GO" id="GO:0044325">
    <property type="term" value="F:transmembrane transporter binding"/>
    <property type="evidence" value="ECO:0007669"/>
    <property type="project" value="TreeGrafter"/>
</dbReference>
<dbReference type="GO" id="GO:0070836">
    <property type="term" value="P:caveola assembly"/>
    <property type="evidence" value="ECO:0007669"/>
    <property type="project" value="InterPro"/>
</dbReference>
<dbReference type="GO" id="GO:0030154">
    <property type="term" value="P:cell differentiation"/>
    <property type="evidence" value="ECO:0007669"/>
    <property type="project" value="TreeGrafter"/>
</dbReference>
<dbReference type="GO" id="GO:0001937">
    <property type="term" value="P:negative regulation of endothelial cell proliferation"/>
    <property type="evidence" value="ECO:0007669"/>
    <property type="project" value="TreeGrafter"/>
</dbReference>
<dbReference type="GO" id="GO:0031623">
    <property type="term" value="P:receptor internalization"/>
    <property type="evidence" value="ECO:0000250"/>
    <property type="project" value="UniProtKB"/>
</dbReference>
<dbReference type="GO" id="GO:0051480">
    <property type="term" value="P:regulation of cytosolic calcium ion concentration"/>
    <property type="evidence" value="ECO:0007669"/>
    <property type="project" value="TreeGrafter"/>
</dbReference>
<dbReference type="GO" id="GO:0031295">
    <property type="term" value="P:T cell costimulation"/>
    <property type="evidence" value="ECO:0000250"/>
    <property type="project" value="UniProtKB"/>
</dbReference>
<dbReference type="InterPro" id="IPR001612">
    <property type="entry name" value="Caveolin"/>
</dbReference>
<dbReference type="InterPro" id="IPR018361">
    <property type="entry name" value="Caveolin_CS"/>
</dbReference>
<dbReference type="PANTHER" id="PTHR10844">
    <property type="entry name" value="CAVEOLIN"/>
    <property type="match status" value="1"/>
</dbReference>
<dbReference type="PANTHER" id="PTHR10844:SF18">
    <property type="entry name" value="CAVEOLIN-1"/>
    <property type="match status" value="1"/>
</dbReference>
<dbReference type="Pfam" id="PF01146">
    <property type="entry name" value="Caveolin"/>
    <property type="match status" value="1"/>
</dbReference>
<dbReference type="PROSITE" id="PS01210">
    <property type="entry name" value="CAVEOLIN"/>
    <property type="match status" value="1"/>
</dbReference>
<proteinExistence type="inferred from homology"/>
<comment type="function">
    <text evidence="3 4">May act as a scaffolding protein within caveolar membranes. Forms a stable heterooligomeric complex with CAV2 that targets to lipid rafts and drives caveolae formation. Mediates the recruitment of CAVIN proteins (CAVIN1/2/3/4) to the caveolae (By similarity). Interacts directly with G-protein alpha subunits and can functionally regulate their activity (By similarity). Involved in the costimulatory signal essential for T-cell receptor (TCR)-mediated T-cell activation. Its binding to DPP4 induces T-cell proliferation and NF-kappa-B activation in a T-cell receptor/CD3-dependent manner (By similarity). Recruits CTNNB1 to caveolar membranes and may regulate CTNNB1-mediated signaling through the Wnt pathway (By similarity). Negatively regulates TGFB1-mediated activation of SMAD2/3 by mediating the internalization of TGFBR1 from membrane rafts leading to its subsequent degradation (By similarity). Binds 20(S)-hydroxycholesterol (20(S)-OHC) (By similarity).</text>
</comment>
<comment type="subunit">
    <text evidence="2 3 4 5">Homooligomer. Interacts with GLIPR2. Interacts with NOSTRIN (By similarity). Interacts with SNAP25 and STX1A (By similarity). Interacts (via the N-terminus) with DPP4; the interaction is direct (By similarity). Interacts with CTNNB1, CDH1 and JUP. Interacts with PACSIN2; this interaction induces membrane tubulation (By similarity). Interacts with SLC7A9 (By similarity). Interacts with BMX and BTK. Interacts with TGFBR1. Interacts with CAVIN3 (via leucine-zipper domain) in a cholesterol-sensitive manner. Interacts with CAVIN1. Interacts with EHD2 in a cholesterol-dependent manner. Forms a ternary complex with UBXN6 and VCP; mediates CAV1 targeting to lysosomes for degradation. Interacts with ABCG1; this interaction regulates ABCG1-mediated cholesterol efflux (By similarity). Interacts with NEU3; this interaction enhances NEU3 sialidase activity within caveola. Interacts (via C-terminus) with SPRY1, SPRY2 (via C-terminus), SPRY3, and SPRY4 (By similarity). Interacts with IGFBP5; this interaction allows trafficking of IGFBP5 from the plasma membrane to the nucleus (By similarity).</text>
</comment>
<comment type="subcellular location">
    <subcellularLocation>
        <location evidence="1">Golgi apparatus membrane</location>
        <topology evidence="1">Peripheral membrane protein</topology>
    </subcellularLocation>
    <subcellularLocation>
        <location evidence="1">Cell membrane</location>
        <topology evidence="1">Peripheral membrane protein</topology>
    </subcellularLocation>
    <subcellularLocation>
        <location evidence="3">Membrane</location>
        <location evidence="3">Caveola</location>
        <topology evidence="1">Peripheral membrane protein</topology>
    </subcellularLocation>
    <subcellularLocation>
        <location evidence="4">Membrane raft</location>
    </subcellularLocation>
    <text evidence="1">Colocalized with DPP4 in membrane rafts. Potential hairpin-like structure in the membrane. Membrane protein of caveolae (By similarity).</text>
</comment>
<comment type="PTM">
    <text evidence="4">Phosphorylated at Tyr-14 by ABL1 in response to oxidative stress.</text>
</comment>
<comment type="PTM">
    <text evidence="4">Ubiquitinated. Undergo monoubiquitination and multi- and/or polyubiquitination. Monoubiquitination of N-terminal lysines promotes integration in a ternary complex with UBXN6 and VCP which promotes oligomeric CAV1 targeting to lysosomes for degradation. Ubiquitinated by ZNRF1; leading to degradation and modulation of the TLR4-mediated immune response.</text>
</comment>
<comment type="similarity">
    <text evidence="7">Belongs to the caveolin family.</text>
</comment>
<reference key="1">
    <citation type="submission" date="2006-09" db="EMBL/GenBank/DDBJ databases">
        <title>NISC comparative sequencing initiative.</title>
        <authorList>
            <person name="Antonellis A."/>
            <person name="Ayele K."/>
            <person name="Benjamin B."/>
            <person name="Blakesley R.W."/>
            <person name="Boakye A."/>
            <person name="Bouffard G.G."/>
            <person name="Brinkley C."/>
            <person name="Brooks S."/>
            <person name="Chu G."/>
            <person name="Coleman H."/>
            <person name="Engle J."/>
            <person name="Gestole M."/>
            <person name="Greene A."/>
            <person name="Guan X."/>
            <person name="Gupta J."/>
            <person name="Haghighi P."/>
            <person name="Han J."/>
            <person name="Hansen N."/>
            <person name="Ho S.-L."/>
            <person name="Hu P."/>
            <person name="Hunter G."/>
            <person name="Hurle B."/>
            <person name="Idol J.R."/>
            <person name="Kwong P."/>
            <person name="Laric P."/>
            <person name="Larson S."/>
            <person name="Lee-Lin S.-Q."/>
            <person name="Legaspi R."/>
            <person name="Madden M."/>
            <person name="Maduro Q.L."/>
            <person name="Maduro V.B."/>
            <person name="Margulies E.H."/>
            <person name="Masiello C."/>
            <person name="Maskeri B."/>
            <person name="McDowell J."/>
            <person name="Mojidi H.A."/>
            <person name="Mullikin J.C."/>
            <person name="Oestreicher J.S."/>
            <person name="Park M."/>
            <person name="Portnoy M.E."/>
            <person name="Prasad A."/>
            <person name="Puri O."/>
            <person name="Reddix-Dugue N."/>
            <person name="Schandler K."/>
            <person name="Schueler M.G."/>
            <person name="Sison C."/>
            <person name="Stantripop S."/>
            <person name="Stephen E."/>
            <person name="Taye A."/>
            <person name="Thomas J.W."/>
            <person name="Thomas P.J."/>
            <person name="Tsipouri V."/>
            <person name="Ung L."/>
            <person name="Vogt J.L."/>
            <person name="Wetherby K.D."/>
            <person name="Young A."/>
            <person name="Green E.D."/>
        </authorList>
    </citation>
    <scope>NUCLEOTIDE SEQUENCE [LARGE SCALE GENOMIC DNA]</scope>
</reference>
<evidence type="ECO:0000250" key="1"/>
<evidence type="ECO:0000250" key="2">
    <source>
        <dbReference type="UniProtKB" id="P41350"/>
    </source>
</evidence>
<evidence type="ECO:0000250" key="3">
    <source>
        <dbReference type="UniProtKB" id="P49817"/>
    </source>
</evidence>
<evidence type="ECO:0000250" key="4">
    <source>
        <dbReference type="UniProtKB" id="Q03135"/>
    </source>
</evidence>
<evidence type="ECO:0000250" key="5">
    <source>
        <dbReference type="UniProtKB" id="Q2IBA5"/>
    </source>
</evidence>
<evidence type="ECO:0000255" key="6"/>
<evidence type="ECO:0000305" key="7"/>
<organism>
    <name type="scientific">Muntiacus muntjak</name>
    <name type="common">Barking deer</name>
    <name type="synonym">Indian muntjac</name>
    <dbReference type="NCBI Taxonomy" id="9888"/>
    <lineage>
        <taxon>Eukaryota</taxon>
        <taxon>Metazoa</taxon>
        <taxon>Chordata</taxon>
        <taxon>Craniata</taxon>
        <taxon>Vertebrata</taxon>
        <taxon>Euteleostomi</taxon>
        <taxon>Mammalia</taxon>
        <taxon>Eutheria</taxon>
        <taxon>Laurasiatheria</taxon>
        <taxon>Artiodactyla</taxon>
        <taxon>Ruminantia</taxon>
        <taxon>Pecora</taxon>
        <taxon>Cervidae</taxon>
        <taxon>Muntiacinae</taxon>
        <taxon>Muntiacus</taxon>
    </lineage>
</organism>
<protein>
    <recommendedName>
        <fullName>Caveolin-1</fullName>
    </recommendedName>
</protein>
<sequence length="178" mass="20625">MSGGKYVDSEGHLYTVPIREQGNIYKPNNKAMAEEMNEKQVYDAHTKEIDLVNRDPKHLNDDVVKIDFEDVIAEPEGTHSFDGIWKASFTTFTVTKYWFYRLLSALFGIPMALIWGIYFAILSFLHIWAVVPCIKSFLIEIQCISRVYSIYVHTFCDPLFEAIGKIFSNIRINMQKEI</sequence>
<accession>Q09YK1</accession>
<name>CAV1_MUNMU</name>
<feature type="initiator methionine" description="Removed" evidence="4">
    <location>
        <position position="1"/>
    </location>
</feature>
<feature type="chain" id="PRO_0000260368" description="Caveolin-1">
    <location>
        <begin position="2"/>
        <end position="178"/>
    </location>
</feature>
<feature type="topological domain" description="Cytoplasmic" evidence="6">
    <location>
        <begin position="2"/>
        <end position="104"/>
    </location>
</feature>
<feature type="intramembrane region" description="Helical" evidence="6">
    <location>
        <begin position="105"/>
        <end position="125"/>
    </location>
</feature>
<feature type="topological domain" description="Cytoplasmic" evidence="6">
    <location>
        <begin position="126"/>
        <end position="178"/>
    </location>
</feature>
<feature type="region of interest" description="Required for homooligomerization" evidence="4">
    <location>
        <begin position="2"/>
        <end position="94"/>
    </location>
</feature>
<feature type="region of interest" description="Interaction with CAVIN3" evidence="4">
    <location>
        <begin position="82"/>
        <end position="94"/>
    </location>
</feature>
<feature type="region of interest" description="Interacts with SPRY1, SPRY2, SPRY3 and SPRY4" evidence="3">
    <location>
        <begin position="131"/>
        <end position="142"/>
    </location>
</feature>
<feature type="region of interest" description="Interacts with SPRY1, SPRY2, and SPRY4" evidence="3">
    <location>
        <begin position="149"/>
        <end position="160"/>
    </location>
</feature>
<feature type="region of interest" description="Interacts with SPRY1, SPRY2, SPRY3 and SPRY4" evidence="3">
    <location>
        <begin position="167"/>
        <end position="178"/>
    </location>
</feature>
<feature type="modified residue" description="N-acetylserine" evidence="4">
    <location>
        <position position="2"/>
    </location>
</feature>
<feature type="modified residue" description="Phosphoserine" evidence="2">
    <location>
        <position position="2"/>
    </location>
</feature>
<feature type="modified residue" description="N6-acetyllysine; alternate" evidence="4">
    <location>
        <position position="5"/>
    </location>
</feature>
<feature type="modified residue" description="Phosphotyrosine" evidence="4">
    <location>
        <position position="6"/>
    </location>
</feature>
<feature type="modified residue" description="Phosphoserine" evidence="3">
    <location>
        <position position="9"/>
    </location>
</feature>
<feature type="modified residue" description="Phosphotyrosine; by ABL1" evidence="3">
    <location>
        <position position="14"/>
    </location>
</feature>
<feature type="modified residue" description="Phosphotyrosine" evidence="4">
    <location>
        <position position="25"/>
    </location>
</feature>
<feature type="lipid moiety-binding region" description="S-palmitoyl cysteine" evidence="1">
    <location>
        <position position="133"/>
    </location>
</feature>
<feature type="lipid moiety-binding region" description="S-palmitoyl cysteine" evidence="1">
    <location>
        <position position="143"/>
    </location>
</feature>
<feature type="lipid moiety-binding region" description="S-palmitoyl cysteine" evidence="1">
    <location>
        <position position="156"/>
    </location>
</feature>
<feature type="cross-link" description="Glycyl lysine isopeptide (Lys-Gly) (interchain with G-Cter in ubiquitin); alternate" evidence="4">
    <location>
        <position position="5"/>
    </location>
</feature>
<feature type="cross-link" description="Glycyl lysine isopeptide (Lys-Gly) (interchain with G-Cter in ubiquitin)" evidence="4">
    <location>
        <position position="26"/>
    </location>
</feature>
<feature type="cross-link" description="Glycyl lysine isopeptide (Lys-Gly) (interchain with G-Cter in ubiquitin)" evidence="4">
    <location>
        <position position="30"/>
    </location>
</feature>
<feature type="cross-link" description="Glycyl lysine isopeptide (Lys-Gly) (interchain with G-Cter in ubiquitin)" evidence="4">
    <location>
        <position position="39"/>
    </location>
</feature>
<feature type="cross-link" description="Glycyl lysine isopeptide (Lys-Gly) (interchain with G-Cter in ubiquitin)" evidence="4">
    <location>
        <position position="47"/>
    </location>
</feature>
<feature type="cross-link" description="Glycyl lysine isopeptide (Lys-Gly) (interchain with G-Cter in ubiquitin)" evidence="4">
    <location>
        <position position="57"/>
    </location>
</feature>
<gene>
    <name type="primary">CAV1</name>
</gene>
<keyword id="KW-0007">Acetylation</keyword>
<keyword id="KW-1003">Cell membrane</keyword>
<keyword id="KW-0333">Golgi apparatus</keyword>
<keyword id="KW-1017">Isopeptide bond</keyword>
<keyword id="KW-0449">Lipoprotein</keyword>
<keyword id="KW-0472">Membrane</keyword>
<keyword id="KW-0564">Palmitate</keyword>
<keyword id="KW-0597">Phosphoprotein</keyword>
<keyword id="KW-0832">Ubl conjugation</keyword>